<dbReference type="EC" id="2.6.1.16" evidence="1"/>
<dbReference type="EMBL" id="AE004437">
    <property type="protein sequence ID" value="AAG18649.1"/>
    <property type="molecule type" value="Genomic_DNA"/>
</dbReference>
<dbReference type="PIR" id="E84160">
    <property type="entry name" value="E84160"/>
</dbReference>
<dbReference type="RefSeq" id="WP_010901947.1">
    <property type="nucleotide sequence ID" value="NC_002607.1"/>
</dbReference>
<dbReference type="SMR" id="Q9HT00"/>
<dbReference type="FunCoup" id="Q9HT00">
    <property type="interactions" value="53"/>
</dbReference>
<dbReference type="STRING" id="64091.VNG_0006G"/>
<dbReference type="PaxDb" id="64091-VNG_0006G"/>
<dbReference type="GeneID" id="68692991"/>
<dbReference type="KEGG" id="hal:VNG_0006G"/>
<dbReference type="PATRIC" id="fig|64091.14.peg.5"/>
<dbReference type="HOGENOM" id="CLU_012520_5_2_2"/>
<dbReference type="InParanoid" id="Q9HT00"/>
<dbReference type="OrthoDB" id="372195at2157"/>
<dbReference type="PhylomeDB" id="Q9HT00"/>
<dbReference type="Proteomes" id="UP000000554">
    <property type="component" value="Chromosome"/>
</dbReference>
<dbReference type="GO" id="GO:0005737">
    <property type="term" value="C:cytoplasm"/>
    <property type="evidence" value="ECO:0007669"/>
    <property type="project" value="UniProtKB-SubCell"/>
</dbReference>
<dbReference type="GO" id="GO:0097367">
    <property type="term" value="F:carbohydrate derivative binding"/>
    <property type="evidence" value="ECO:0007669"/>
    <property type="project" value="InterPro"/>
</dbReference>
<dbReference type="GO" id="GO:0004360">
    <property type="term" value="F:glutamine-fructose-6-phosphate transaminase (isomerizing) activity"/>
    <property type="evidence" value="ECO:0000318"/>
    <property type="project" value="GO_Central"/>
</dbReference>
<dbReference type="GO" id="GO:0005975">
    <property type="term" value="P:carbohydrate metabolic process"/>
    <property type="evidence" value="ECO:0007669"/>
    <property type="project" value="UniProtKB-UniRule"/>
</dbReference>
<dbReference type="GO" id="GO:0006002">
    <property type="term" value="P:fructose 6-phosphate metabolic process"/>
    <property type="evidence" value="ECO:0000318"/>
    <property type="project" value="GO_Central"/>
</dbReference>
<dbReference type="GO" id="GO:0006487">
    <property type="term" value="P:protein N-linked glycosylation"/>
    <property type="evidence" value="ECO:0000318"/>
    <property type="project" value="GO_Central"/>
</dbReference>
<dbReference type="GO" id="GO:0006047">
    <property type="term" value="P:UDP-N-acetylglucosamine metabolic process"/>
    <property type="evidence" value="ECO:0000318"/>
    <property type="project" value="GO_Central"/>
</dbReference>
<dbReference type="CDD" id="cd00714">
    <property type="entry name" value="GFAT"/>
    <property type="match status" value="1"/>
</dbReference>
<dbReference type="CDD" id="cd05008">
    <property type="entry name" value="SIS_GlmS_GlmD_1"/>
    <property type="match status" value="1"/>
</dbReference>
<dbReference type="CDD" id="cd05009">
    <property type="entry name" value="SIS_GlmS_GlmD_2"/>
    <property type="match status" value="1"/>
</dbReference>
<dbReference type="FunFam" id="3.40.50.10490:FF:000001">
    <property type="entry name" value="Glutamine--fructose-6-phosphate aminotransferase [isomerizing]"/>
    <property type="match status" value="1"/>
</dbReference>
<dbReference type="FunFam" id="3.60.20.10:FF:000006">
    <property type="entry name" value="Glutamine--fructose-6-phosphate aminotransferase [isomerizing]"/>
    <property type="match status" value="1"/>
</dbReference>
<dbReference type="Gene3D" id="3.40.50.10490">
    <property type="entry name" value="Glucose-6-phosphate isomerase like protein, domain 1"/>
    <property type="match status" value="2"/>
</dbReference>
<dbReference type="Gene3D" id="3.60.20.10">
    <property type="entry name" value="Glutamine Phosphoribosylpyrophosphate, subunit 1, domain 1"/>
    <property type="match status" value="1"/>
</dbReference>
<dbReference type="HAMAP" id="MF_00164">
    <property type="entry name" value="GlmS"/>
    <property type="match status" value="1"/>
</dbReference>
<dbReference type="InterPro" id="IPR017932">
    <property type="entry name" value="GATase_2_dom"/>
</dbReference>
<dbReference type="InterPro" id="IPR005855">
    <property type="entry name" value="GFAT"/>
</dbReference>
<dbReference type="InterPro" id="IPR047084">
    <property type="entry name" value="GFAT_N"/>
</dbReference>
<dbReference type="InterPro" id="IPR035466">
    <property type="entry name" value="GlmS/AgaS_SIS"/>
</dbReference>
<dbReference type="InterPro" id="IPR035490">
    <property type="entry name" value="GlmS/FrlB_SIS"/>
</dbReference>
<dbReference type="InterPro" id="IPR029055">
    <property type="entry name" value="Ntn_hydrolases_N"/>
</dbReference>
<dbReference type="InterPro" id="IPR001347">
    <property type="entry name" value="SIS_dom"/>
</dbReference>
<dbReference type="InterPro" id="IPR046348">
    <property type="entry name" value="SIS_dom_sf"/>
</dbReference>
<dbReference type="NCBIfam" id="TIGR01135">
    <property type="entry name" value="glmS"/>
    <property type="match status" value="1"/>
</dbReference>
<dbReference type="NCBIfam" id="NF001484">
    <property type="entry name" value="PRK00331.1"/>
    <property type="match status" value="1"/>
</dbReference>
<dbReference type="PANTHER" id="PTHR10937">
    <property type="entry name" value="GLUCOSAMINE--FRUCTOSE-6-PHOSPHATE AMINOTRANSFERASE, ISOMERIZING"/>
    <property type="match status" value="1"/>
</dbReference>
<dbReference type="PANTHER" id="PTHR10937:SF0">
    <property type="entry name" value="GLUTAMINE--FRUCTOSE-6-PHOSPHATE TRANSAMINASE (ISOMERIZING)"/>
    <property type="match status" value="1"/>
</dbReference>
<dbReference type="Pfam" id="PF13522">
    <property type="entry name" value="GATase_6"/>
    <property type="match status" value="1"/>
</dbReference>
<dbReference type="Pfam" id="PF01380">
    <property type="entry name" value="SIS"/>
    <property type="match status" value="2"/>
</dbReference>
<dbReference type="SUPFAM" id="SSF56235">
    <property type="entry name" value="N-terminal nucleophile aminohydrolases (Ntn hydrolases)"/>
    <property type="match status" value="1"/>
</dbReference>
<dbReference type="SUPFAM" id="SSF53697">
    <property type="entry name" value="SIS domain"/>
    <property type="match status" value="1"/>
</dbReference>
<dbReference type="PROSITE" id="PS51278">
    <property type="entry name" value="GATASE_TYPE_2"/>
    <property type="match status" value="1"/>
</dbReference>
<dbReference type="PROSITE" id="PS51464">
    <property type="entry name" value="SIS"/>
    <property type="match status" value="2"/>
</dbReference>
<sequence>MCGITGYIGTDPTGRIVHEGLQNLEYRGYDSAGIALAGGGSLSVHKTGGEVGDLPVPSREDGTRGIGHTRWSTHGEPTRENAHPHTDCTGDVAVVHNGIIENYAALADELRADHVFHSDTDTEVVPHLIETHLADGVSLLTAVQRTTERLTGSYALAITAAGHDGIVVARSDSPLLLGHGDTGTFVASDATAFIEHTNRVTYLRNGDIAHLTETEWTVYNDGARVSRDIEALDWSADAAGKSGYDHYMLKEIHEQPRALRQAISGRISDLGTDVTLDMELSTETLQNVAELQIVACGTSYHAGLYAKELLETHADLPVTVHVASEYELRGGRSPEDTLVVAITQSGETADTLAALRSAAQKGAPTLALTNTLGSTVTREADDALFIRAGPEIGVAATKTFVSQVATAALLTMHIGRARNAISTGDAAALRDAIRDLPGAVQQVLDQAPEIASIGREYADSDAFFYVGRRAGRPVALESALKLKEISYDHAEGFSAGELKHGPLALVTDNTPVVAVLTEYAAPERTANNVKEVQSRGADVIGLASDAGTARHADVTITLPACGPLEPVVANVALQLFAYHIANEKGRPIDKPRNLAKSVTVE</sequence>
<reference key="1">
    <citation type="journal article" date="2000" name="Proc. Natl. Acad. Sci. U.S.A.">
        <title>Genome sequence of Halobacterium species NRC-1.</title>
        <authorList>
            <person name="Ng W.V."/>
            <person name="Kennedy S.P."/>
            <person name="Mahairas G.G."/>
            <person name="Berquist B."/>
            <person name="Pan M."/>
            <person name="Shukla H.D."/>
            <person name="Lasky S.R."/>
            <person name="Baliga N.S."/>
            <person name="Thorsson V."/>
            <person name="Sbrogna J."/>
            <person name="Swartzell S."/>
            <person name="Weir D."/>
            <person name="Hall J."/>
            <person name="Dahl T.A."/>
            <person name="Welti R."/>
            <person name="Goo Y.A."/>
            <person name="Leithauser B."/>
            <person name="Keller K."/>
            <person name="Cruz R."/>
            <person name="Danson M.J."/>
            <person name="Hough D.W."/>
            <person name="Maddocks D.G."/>
            <person name="Jablonski P.E."/>
            <person name="Krebs M.P."/>
            <person name="Angevine C.M."/>
            <person name="Dale H."/>
            <person name="Isenbarger T.A."/>
            <person name="Peck R.F."/>
            <person name="Pohlschroder M."/>
            <person name="Spudich J.L."/>
            <person name="Jung K.-H."/>
            <person name="Alam M."/>
            <person name="Freitas T."/>
            <person name="Hou S."/>
            <person name="Daniels C.J."/>
            <person name="Dennis P.P."/>
            <person name="Omer A.D."/>
            <person name="Ebhardt H."/>
            <person name="Lowe T.M."/>
            <person name="Liang P."/>
            <person name="Riley M."/>
            <person name="Hood L."/>
            <person name="DasSarma S."/>
        </authorList>
    </citation>
    <scope>NUCLEOTIDE SEQUENCE [LARGE SCALE GENOMIC DNA]</scope>
    <source>
        <strain>ATCC 700922 / JCM 11081 / NRC-1</strain>
    </source>
</reference>
<keyword id="KW-0032">Aminotransferase</keyword>
<keyword id="KW-0963">Cytoplasm</keyword>
<keyword id="KW-0315">Glutamine amidotransferase</keyword>
<keyword id="KW-1185">Reference proteome</keyword>
<keyword id="KW-0677">Repeat</keyword>
<keyword id="KW-0808">Transferase</keyword>
<organism>
    <name type="scientific">Halobacterium salinarum (strain ATCC 700922 / JCM 11081 / NRC-1)</name>
    <name type="common">Halobacterium halobium</name>
    <dbReference type="NCBI Taxonomy" id="64091"/>
    <lineage>
        <taxon>Archaea</taxon>
        <taxon>Methanobacteriati</taxon>
        <taxon>Methanobacteriota</taxon>
        <taxon>Stenosarchaea group</taxon>
        <taxon>Halobacteria</taxon>
        <taxon>Halobacteriales</taxon>
        <taxon>Halobacteriaceae</taxon>
        <taxon>Halobacterium</taxon>
        <taxon>Halobacterium salinarum NRC-34001</taxon>
    </lineage>
</organism>
<protein>
    <recommendedName>
        <fullName evidence="1">Glutamine--fructose-6-phosphate aminotransferase [isomerizing]</fullName>
        <ecNumber evidence="1">2.6.1.16</ecNumber>
    </recommendedName>
    <alternativeName>
        <fullName evidence="1">D-fructose-6-phosphate amidotransferase</fullName>
    </alternativeName>
    <alternativeName>
        <fullName evidence="1">GFAT</fullName>
    </alternativeName>
    <alternativeName>
        <fullName evidence="1">Glucosamine-6-phosphate synthase</fullName>
    </alternativeName>
    <alternativeName>
        <fullName evidence="1">Hexosephosphate aminotransferase</fullName>
    </alternativeName>
    <alternativeName>
        <fullName evidence="1">L-glutamine--D-fructose-6-phosphate amidotransferase</fullName>
    </alternativeName>
</protein>
<name>GLMS_HALSA</name>
<evidence type="ECO:0000255" key="1">
    <source>
        <dbReference type="HAMAP-Rule" id="MF_00164"/>
    </source>
</evidence>
<proteinExistence type="inferred from homology"/>
<feature type="initiator methionine" description="Removed" evidence="1">
    <location>
        <position position="1"/>
    </location>
</feature>
<feature type="chain" id="PRO_0000135423" description="Glutamine--fructose-6-phosphate aminotransferase [isomerizing]">
    <location>
        <begin position="2"/>
        <end position="601"/>
    </location>
</feature>
<feature type="domain" description="Glutamine amidotransferase type-2" evidence="1">
    <location>
        <begin position="2"/>
        <end position="214"/>
    </location>
</feature>
<feature type="domain" description="SIS 1" evidence="1">
    <location>
        <begin position="281"/>
        <end position="420"/>
    </location>
</feature>
<feature type="domain" description="SIS 2" evidence="1">
    <location>
        <begin position="453"/>
        <end position="591"/>
    </location>
</feature>
<feature type="active site" description="Nucleophile; for GATase activity" evidence="1">
    <location>
        <position position="2"/>
    </location>
</feature>
<feature type="active site" description="For Fru-6P isomerization activity" evidence="1">
    <location>
        <position position="596"/>
    </location>
</feature>
<gene>
    <name evidence="1" type="primary">glmS</name>
    <name type="ordered locus">VNG_0006G</name>
</gene>
<comment type="function">
    <text evidence="1">Catalyzes the first step in hexosamine metabolism, converting fructose-6P into glucosamine-6P using glutamine as a nitrogen source.</text>
</comment>
<comment type="catalytic activity">
    <reaction evidence="1">
        <text>D-fructose 6-phosphate + L-glutamine = D-glucosamine 6-phosphate + L-glutamate</text>
        <dbReference type="Rhea" id="RHEA:13237"/>
        <dbReference type="ChEBI" id="CHEBI:29985"/>
        <dbReference type="ChEBI" id="CHEBI:58359"/>
        <dbReference type="ChEBI" id="CHEBI:58725"/>
        <dbReference type="ChEBI" id="CHEBI:61527"/>
        <dbReference type="EC" id="2.6.1.16"/>
    </reaction>
</comment>
<comment type="subunit">
    <text evidence="1">Homodimer.</text>
</comment>
<comment type="subcellular location">
    <subcellularLocation>
        <location evidence="1">Cytoplasm</location>
    </subcellularLocation>
</comment>
<accession>Q9HT00</accession>